<feature type="chain" id="PRO_1000185154" description="GTP cyclohydrolase FolE2">
    <location>
        <begin position="1"/>
        <end position="292"/>
    </location>
</feature>
<feature type="site" description="May be catalytically important" evidence="1">
    <location>
        <position position="176"/>
    </location>
</feature>
<keyword id="KW-0378">Hydrolase</keyword>
<keyword id="KW-1185">Reference proteome</keyword>
<protein>
    <recommendedName>
        <fullName evidence="1">GTP cyclohydrolase FolE2</fullName>
        <ecNumber evidence="1">3.5.4.16</ecNumber>
    </recommendedName>
</protein>
<comment type="function">
    <text evidence="1">Converts GTP to 7,8-dihydroneopterin triphosphate.</text>
</comment>
<comment type="catalytic activity">
    <reaction evidence="1">
        <text>GTP + H2O = 7,8-dihydroneopterin 3'-triphosphate + formate + H(+)</text>
        <dbReference type="Rhea" id="RHEA:17473"/>
        <dbReference type="ChEBI" id="CHEBI:15377"/>
        <dbReference type="ChEBI" id="CHEBI:15378"/>
        <dbReference type="ChEBI" id="CHEBI:15740"/>
        <dbReference type="ChEBI" id="CHEBI:37565"/>
        <dbReference type="ChEBI" id="CHEBI:58462"/>
        <dbReference type="EC" id="3.5.4.16"/>
    </reaction>
</comment>
<comment type="pathway">
    <text evidence="1">Cofactor biosynthesis; 7,8-dihydroneopterin triphosphate biosynthesis; 7,8-dihydroneopterin triphosphate from GTP: step 1/1.</text>
</comment>
<comment type="similarity">
    <text evidence="1">Belongs to the GTP cyclohydrolase IV family.</text>
</comment>
<name>GCH4_MACCJ</name>
<reference key="1">
    <citation type="journal article" date="2009" name="J. Bacteriol.">
        <title>Complete genome sequence of Macrococcus caseolyticus strain JCSCS5402, reflecting the ancestral genome of the human-pathogenic staphylococci.</title>
        <authorList>
            <person name="Baba T."/>
            <person name="Kuwahara-Arai K."/>
            <person name="Uchiyama I."/>
            <person name="Takeuchi F."/>
            <person name="Ito T."/>
            <person name="Hiramatsu K."/>
        </authorList>
    </citation>
    <scope>NUCLEOTIDE SEQUENCE [LARGE SCALE GENOMIC DNA]</scope>
    <source>
        <strain>JCSC5402</strain>
    </source>
</reference>
<sequence length="292" mass="33158">MDQYNLNTREGRWKHFGSVDPIKGTKPTEKEKMTDLQSSKKDFLFEIDHVGIKNLTYPVRLDGYQTAGTFSLSTHLAKDEKGINMSRILESVEAHYDNGLSLDFDTLKTVLITLQTVMHQKDATVDVDAKWFFDRFSPVTNLRAIGHADTRFSMTVEGDTTVNKSLTLTAMVTTLCPCSKEISEYSAHNQRGIVTVKADFAPEGELPANFKERILEAMEVNASSMLYPILKRTDEKSVTERAYENPRFVEDLLRLIAADLVELDFVTGFTIECRNEESIHQHDAFARLSYNK</sequence>
<organism>
    <name type="scientific">Macrococcus caseolyticus (strain JCSC5402)</name>
    <name type="common">Macrococcoides caseolyticum</name>
    <dbReference type="NCBI Taxonomy" id="458233"/>
    <lineage>
        <taxon>Bacteria</taxon>
        <taxon>Bacillati</taxon>
        <taxon>Bacillota</taxon>
        <taxon>Bacilli</taxon>
        <taxon>Bacillales</taxon>
        <taxon>Staphylococcaceae</taxon>
        <taxon>Macrococcoides</taxon>
    </lineage>
</organism>
<dbReference type="EC" id="3.5.4.16" evidence="1"/>
<dbReference type="EMBL" id="AP009484">
    <property type="protein sequence ID" value="BAH18554.1"/>
    <property type="molecule type" value="Genomic_DNA"/>
</dbReference>
<dbReference type="RefSeq" id="WP_015912346.1">
    <property type="nucleotide sequence ID" value="NC_011999.1"/>
</dbReference>
<dbReference type="SMR" id="B9E8N6"/>
<dbReference type="STRING" id="458233.MCCL_1847"/>
<dbReference type="KEGG" id="mcl:MCCL_1847"/>
<dbReference type="eggNOG" id="COG1469">
    <property type="taxonomic scope" value="Bacteria"/>
</dbReference>
<dbReference type="HOGENOM" id="CLU_062816_1_1_9"/>
<dbReference type="OrthoDB" id="9774824at2"/>
<dbReference type="UniPathway" id="UPA00848">
    <property type="reaction ID" value="UER00151"/>
</dbReference>
<dbReference type="Proteomes" id="UP000001383">
    <property type="component" value="Chromosome"/>
</dbReference>
<dbReference type="GO" id="GO:0003934">
    <property type="term" value="F:GTP cyclohydrolase I activity"/>
    <property type="evidence" value="ECO:0007669"/>
    <property type="project" value="UniProtKB-UniRule"/>
</dbReference>
<dbReference type="GO" id="GO:0046654">
    <property type="term" value="P:tetrahydrofolate biosynthetic process"/>
    <property type="evidence" value="ECO:0007669"/>
    <property type="project" value="UniProtKB-UniRule"/>
</dbReference>
<dbReference type="Gene3D" id="3.10.270.10">
    <property type="entry name" value="Urate Oxidase"/>
    <property type="match status" value="1"/>
</dbReference>
<dbReference type="HAMAP" id="MF_01527_B">
    <property type="entry name" value="GTP_cyclohydrol_B"/>
    <property type="match status" value="1"/>
</dbReference>
<dbReference type="InterPro" id="IPR022838">
    <property type="entry name" value="GTP_cyclohydrolase_FolE2"/>
</dbReference>
<dbReference type="InterPro" id="IPR003801">
    <property type="entry name" value="GTP_cyclohydrolase_FolE2/MptA"/>
</dbReference>
<dbReference type="NCBIfam" id="NF010200">
    <property type="entry name" value="PRK13674.1-1"/>
    <property type="match status" value="1"/>
</dbReference>
<dbReference type="PANTHER" id="PTHR36445">
    <property type="entry name" value="GTP CYCLOHYDROLASE MPTA"/>
    <property type="match status" value="1"/>
</dbReference>
<dbReference type="PANTHER" id="PTHR36445:SF1">
    <property type="entry name" value="GTP CYCLOHYDROLASE MPTA"/>
    <property type="match status" value="1"/>
</dbReference>
<dbReference type="Pfam" id="PF02649">
    <property type="entry name" value="GCHY-1"/>
    <property type="match status" value="1"/>
</dbReference>
<accession>B9E8N6</accession>
<evidence type="ECO:0000255" key="1">
    <source>
        <dbReference type="HAMAP-Rule" id="MF_01527"/>
    </source>
</evidence>
<gene>
    <name evidence="1" type="primary">folE2</name>
    <name type="ordered locus">MCCL_1847</name>
</gene>
<proteinExistence type="inferred from homology"/>